<comment type="catalytic activity">
    <reaction evidence="1">
        <text>urea + 2 H2O + H(+) = hydrogencarbonate + 2 NH4(+)</text>
        <dbReference type="Rhea" id="RHEA:20557"/>
        <dbReference type="ChEBI" id="CHEBI:15377"/>
        <dbReference type="ChEBI" id="CHEBI:15378"/>
        <dbReference type="ChEBI" id="CHEBI:16199"/>
        <dbReference type="ChEBI" id="CHEBI:17544"/>
        <dbReference type="ChEBI" id="CHEBI:28938"/>
        <dbReference type="EC" id="3.5.1.5"/>
    </reaction>
</comment>
<comment type="cofactor">
    <cofactor evidence="1">
        <name>Ni cation</name>
        <dbReference type="ChEBI" id="CHEBI:25516"/>
    </cofactor>
    <text evidence="1">Binds 2 nickel ions per subunit.</text>
</comment>
<comment type="pathway">
    <text evidence="1">Nitrogen metabolism; urea degradation; CO(2) and NH(3) from urea (urease route): step 1/1.</text>
</comment>
<comment type="subunit">
    <text evidence="1">Heterohexamer of 3 UreA (alpha) and 3 UreB (beta) subunits.</text>
</comment>
<comment type="subcellular location">
    <subcellularLocation>
        <location evidence="1">Cytoplasm</location>
    </subcellularLocation>
</comment>
<comment type="PTM">
    <text evidence="1">Carboxylation allows a single lysine to coordinate two nickel ions.</text>
</comment>
<comment type="similarity">
    <text evidence="1">Belongs to the metallo-dependent hydrolases superfamily. Urease alpha subunit family.</text>
</comment>
<comment type="caution">
    <text evidence="2">The orthologous protein is known as the alpha subunit (UreC) in most other bacteria.</text>
</comment>
<feature type="chain" id="PRO_0000234287" description="Urease subunit beta">
    <location>
        <begin position="1"/>
        <end position="565"/>
    </location>
</feature>
<feature type="domain" description="Urease" evidence="1">
    <location>
        <begin position="130"/>
        <end position="565"/>
    </location>
</feature>
<feature type="active site" description="Proton donor" evidence="1">
    <location>
        <position position="321"/>
    </location>
</feature>
<feature type="binding site" evidence="1">
    <location>
        <position position="135"/>
    </location>
    <ligand>
        <name>Ni(2+)</name>
        <dbReference type="ChEBI" id="CHEBI:49786"/>
        <label>1</label>
    </ligand>
</feature>
<feature type="binding site" evidence="1">
    <location>
        <position position="137"/>
    </location>
    <ligand>
        <name>Ni(2+)</name>
        <dbReference type="ChEBI" id="CHEBI:49786"/>
        <label>1</label>
    </ligand>
</feature>
<feature type="binding site" description="via carbamate group" evidence="1">
    <location>
        <position position="218"/>
    </location>
    <ligand>
        <name>Ni(2+)</name>
        <dbReference type="ChEBI" id="CHEBI:49786"/>
        <label>1</label>
    </ligand>
</feature>
<feature type="binding site" description="via carbamate group" evidence="1">
    <location>
        <position position="218"/>
    </location>
    <ligand>
        <name>Ni(2+)</name>
        <dbReference type="ChEBI" id="CHEBI:49786"/>
        <label>2</label>
    </ligand>
</feature>
<feature type="binding site" evidence="1">
    <location>
        <position position="220"/>
    </location>
    <ligand>
        <name>substrate</name>
    </ligand>
</feature>
<feature type="binding site" evidence="1">
    <location>
        <position position="247"/>
    </location>
    <ligand>
        <name>Ni(2+)</name>
        <dbReference type="ChEBI" id="CHEBI:49786"/>
        <label>2</label>
    </ligand>
</feature>
<feature type="binding site" evidence="1">
    <location>
        <position position="273"/>
    </location>
    <ligand>
        <name>Ni(2+)</name>
        <dbReference type="ChEBI" id="CHEBI:49786"/>
        <label>2</label>
    </ligand>
</feature>
<feature type="binding site" evidence="1">
    <location>
        <position position="361"/>
    </location>
    <ligand>
        <name>Ni(2+)</name>
        <dbReference type="ChEBI" id="CHEBI:49786"/>
        <label>1</label>
    </ligand>
</feature>
<feature type="modified residue" description="N6-carboxylysine" evidence="1">
    <location>
        <position position="218"/>
    </location>
</feature>
<sequence length="565" mass="61439">MIKISKKDYVNMYGPTTNDRVRLADTDLILRVEKDYTLYGEEVKFGGGKNIRDGMAQSVSEGDFPDLVLTNALIVDYTGIYKADIGIKNGYIVGIGKAGNPDIQDGVDPSLIIGTNTDIIGAEGLIVTAGGIDTHIHFISPTQIECALYSGVTTMIGGGIGPSEGTNATTCTSGAYHIHSMLKATQNYPMNFGFLGKGNSSNKNALKEQIIAGACGLKIHEDWGATSSVIDASLNIADEMDIQVAIHTDTLNEAGFVEDTIKAINGRVIHTFHTEGAGGGHAPDIIKMAGFENVLPASTNPTMPFTKNTIDEHLDMLMVCHHLDNKIKEDVEFADSRIRPETIAAEDKLHDMGVFSIMSSDSQAMGRVGEVILRTWQSADKCKKEFGALKEDNDLDDNFRIKRYIAKYTINPAIAHGIDSYVGSIEVGKFADLVLWQPKFFGVKPKLILKGGLIVGAKIGDANASIPTPEPIIYEKMFGANLNENALHFVSKASLDANIPEKLSLKRKCVAVKNCRNITKKDLKFNDKVQDIEVNPQTYEVKINGELISSKSVDSLALARKYFMI</sequence>
<protein>
    <recommendedName>
        <fullName evidence="1">Urease subunit beta</fullName>
        <ecNumber evidence="1">3.5.1.5</ecNumber>
    </recommendedName>
    <alternativeName>
        <fullName evidence="1">Urea amidohydrolase subunit beta</fullName>
    </alternativeName>
</protein>
<accession>Q5FB23</accession>
<name>URE1_CAMLA</name>
<proteinExistence type="inferred from homology"/>
<reference key="1">
    <citation type="journal article" date="2006" name="Int. J. Hyg. Environ. Health">
        <title>Genetic heterogeneity of urease gene loci in urease-positive thermophilic Campylobacter (UPTC).</title>
        <authorList>
            <person name="Usui K."/>
            <person name="Iida H."/>
            <person name="Ueno H."/>
            <person name="Sekizuka T."/>
            <person name="Matsuda M."/>
            <person name="Murayama O."/>
            <person name="Cherie Millar B."/>
            <person name="Moore J.E."/>
        </authorList>
    </citation>
    <scope>NUCLEOTIDE SEQUENCE [GENOMIC DNA]</scope>
    <source>
        <strain>CF89-12</strain>
    </source>
</reference>
<dbReference type="EC" id="3.5.1.5" evidence="1"/>
<dbReference type="EMBL" id="AB201709">
    <property type="protein sequence ID" value="BAD89502.1"/>
    <property type="molecule type" value="Genomic_DNA"/>
</dbReference>
<dbReference type="RefSeq" id="WP_261545340.1">
    <property type="nucleotide sequence ID" value="NZ_CAKOEO010000017.1"/>
</dbReference>
<dbReference type="SMR" id="Q5FB23"/>
<dbReference type="UniPathway" id="UPA00258">
    <property type="reaction ID" value="UER00370"/>
</dbReference>
<dbReference type="GO" id="GO:0005737">
    <property type="term" value="C:cytoplasm"/>
    <property type="evidence" value="ECO:0007669"/>
    <property type="project" value="UniProtKB-SubCell"/>
</dbReference>
<dbReference type="GO" id="GO:0016151">
    <property type="term" value="F:nickel cation binding"/>
    <property type="evidence" value="ECO:0007669"/>
    <property type="project" value="UniProtKB-UniRule"/>
</dbReference>
<dbReference type="GO" id="GO:0009039">
    <property type="term" value="F:urease activity"/>
    <property type="evidence" value="ECO:0007669"/>
    <property type="project" value="UniProtKB-UniRule"/>
</dbReference>
<dbReference type="GO" id="GO:0043419">
    <property type="term" value="P:urea catabolic process"/>
    <property type="evidence" value="ECO:0007669"/>
    <property type="project" value="UniProtKB-UniRule"/>
</dbReference>
<dbReference type="CDD" id="cd00375">
    <property type="entry name" value="Urease_alpha"/>
    <property type="match status" value="1"/>
</dbReference>
<dbReference type="Gene3D" id="3.20.20.140">
    <property type="entry name" value="Metal-dependent hydrolases"/>
    <property type="match status" value="1"/>
</dbReference>
<dbReference type="Gene3D" id="2.30.40.10">
    <property type="entry name" value="Urease, subunit C, domain 1"/>
    <property type="match status" value="1"/>
</dbReference>
<dbReference type="HAMAP" id="MF_01953">
    <property type="entry name" value="Urease_alpha"/>
    <property type="match status" value="1"/>
</dbReference>
<dbReference type="InterPro" id="IPR006680">
    <property type="entry name" value="Amidohydro-rel"/>
</dbReference>
<dbReference type="InterPro" id="IPR011059">
    <property type="entry name" value="Metal-dep_hydrolase_composite"/>
</dbReference>
<dbReference type="InterPro" id="IPR032466">
    <property type="entry name" value="Metal_Hydrolase"/>
</dbReference>
<dbReference type="InterPro" id="IPR011612">
    <property type="entry name" value="Urease_alpha_N_dom"/>
</dbReference>
<dbReference type="InterPro" id="IPR050112">
    <property type="entry name" value="Urease_alpha_subunit"/>
</dbReference>
<dbReference type="InterPro" id="IPR017950">
    <property type="entry name" value="Urease_AS"/>
</dbReference>
<dbReference type="InterPro" id="IPR005848">
    <property type="entry name" value="Urease_asu"/>
</dbReference>
<dbReference type="InterPro" id="IPR017951">
    <property type="entry name" value="Urease_asu_c"/>
</dbReference>
<dbReference type="InterPro" id="IPR029754">
    <property type="entry name" value="Urease_Ni-bd"/>
</dbReference>
<dbReference type="NCBIfam" id="NF009686">
    <property type="entry name" value="PRK13207.1"/>
    <property type="match status" value="1"/>
</dbReference>
<dbReference type="NCBIfam" id="TIGR01792">
    <property type="entry name" value="urease_alph"/>
    <property type="match status" value="1"/>
</dbReference>
<dbReference type="PANTHER" id="PTHR43440">
    <property type="entry name" value="UREASE"/>
    <property type="match status" value="1"/>
</dbReference>
<dbReference type="PANTHER" id="PTHR43440:SF1">
    <property type="entry name" value="UREASE"/>
    <property type="match status" value="1"/>
</dbReference>
<dbReference type="Pfam" id="PF01979">
    <property type="entry name" value="Amidohydro_1"/>
    <property type="match status" value="1"/>
</dbReference>
<dbReference type="Pfam" id="PF00449">
    <property type="entry name" value="Urease_alpha"/>
    <property type="match status" value="1"/>
</dbReference>
<dbReference type="PRINTS" id="PR01752">
    <property type="entry name" value="UREASE"/>
</dbReference>
<dbReference type="SUPFAM" id="SSF51338">
    <property type="entry name" value="Composite domain of metallo-dependent hydrolases"/>
    <property type="match status" value="1"/>
</dbReference>
<dbReference type="SUPFAM" id="SSF51556">
    <property type="entry name" value="Metallo-dependent hydrolases"/>
    <property type="match status" value="1"/>
</dbReference>
<dbReference type="PROSITE" id="PS01120">
    <property type="entry name" value="UREASE_1"/>
    <property type="match status" value="1"/>
</dbReference>
<dbReference type="PROSITE" id="PS00145">
    <property type="entry name" value="UREASE_2"/>
    <property type="match status" value="1"/>
</dbReference>
<dbReference type="PROSITE" id="PS51368">
    <property type="entry name" value="UREASE_3"/>
    <property type="match status" value="1"/>
</dbReference>
<gene>
    <name evidence="1" type="primary">ureB</name>
</gene>
<organism>
    <name type="scientific">Campylobacter lari</name>
    <dbReference type="NCBI Taxonomy" id="201"/>
    <lineage>
        <taxon>Bacteria</taxon>
        <taxon>Pseudomonadati</taxon>
        <taxon>Campylobacterota</taxon>
        <taxon>Epsilonproteobacteria</taxon>
        <taxon>Campylobacterales</taxon>
        <taxon>Campylobacteraceae</taxon>
        <taxon>Campylobacter</taxon>
    </lineage>
</organism>
<keyword id="KW-0963">Cytoplasm</keyword>
<keyword id="KW-0378">Hydrolase</keyword>
<keyword id="KW-0479">Metal-binding</keyword>
<keyword id="KW-0533">Nickel</keyword>
<evidence type="ECO:0000255" key="1">
    <source>
        <dbReference type="HAMAP-Rule" id="MF_01953"/>
    </source>
</evidence>
<evidence type="ECO:0000305" key="2"/>